<protein>
    <recommendedName>
        <fullName>Putative uncharacterized protein YDL071C</fullName>
    </recommendedName>
</protein>
<proteinExistence type="uncertain"/>
<name>YD071_YEAST</name>
<organism>
    <name type="scientific">Saccharomyces cerevisiae (strain ATCC 204508 / S288c)</name>
    <name type="common">Baker's yeast</name>
    <dbReference type="NCBI Taxonomy" id="559292"/>
    <lineage>
        <taxon>Eukaryota</taxon>
        <taxon>Fungi</taxon>
        <taxon>Dikarya</taxon>
        <taxon>Ascomycota</taxon>
        <taxon>Saccharomycotina</taxon>
        <taxon>Saccharomycetes</taxon>
        <taxon>Saccharomycetales</taxon>
        <taxon>Saccharomycetaceae</taxon>
        <taxon>Saccharomyces</taxon>
    </lineage>
</organism>
<gene>
    <name type="ordered locus">YDL071C</name>
</gene>
<feature type="chain" id="PRO_0000299854" description="Putative uncharacterized protein YDL071C">
    <location>
        <begin position="1"/>
        <end position="124"/>
    </location>
</feature>
<evidence type="ECO:0000305" key="1">
    <source>
    </source>
</evidence>
<dbReference type="EMBL" id="Z74119">
    <property type="protein sequence ID" value="CAA98635.1"/>
    <property type="molecule type" value="Genomic_DNA"/>
</dbReference>
<dbReference type="PIR" id="S67606">
    <property type="entry name" value="S67606"/>
</dbReference>
<dbReference type="SMR" id="Q07438"/>
<dbReference type="DIP" id="DIP-1792N"/>
<dbReference type="IntAct" id="Q07438">
    <property type="interactions" value="6"/>
</dbReference>
<dbReference type="MINT" id="Q07438"/>
<dbReference type="STRING" id="4932.YDL071C"/>
<dbReference type="PaxDb" id="4932-YDL071C"/>
<dbReference type="EnsemblFungi" id="YDL071C_mRNA">
    <property type="protein sequence ID" value="YDL071C"/>
    <property type="gene ID" value="YDL071C"/>
</dbReference>
<dbReference type="AGR" id="SGD:S000002229"/>
<dbReference type="SGD" id="S000002229">
    <property type="gene designation" value="YDL071C"/>
</dbReference>
<dbReference type="HOGENOM" id="CLU_2005215_0_0_1"/>
<accession>Q07438</accession>
<reference key="1">
    <citation type="journal article" date="1997" name="Nature">
        <title>The nucleotide sequence of Saccharomyces cerevisiae chromosome IV.</title>
        <authorList>
            <person name="Jacq C."/>
            <person name="Alt-Moerbe J."/>
            <person name="Andre B."/>
            <person name="Arnold W."/>
            <person name="Bahr A."/>
            <person name="Ballesta J.P.G."/>
            <person name="Bargues M."/>
            <person name="Baron L."/>
            <person name="Becker A."/>
            <person name="Biteau N."/>
            <person name="Bloecker H."/>
            <person name="Blugeon C."/>
            <person name="Boskovic J."/>
            <person name="Brandt P."/>
            <person name="Brueckner M."/>
            <person name="Buitrago M.J."/>
            <person name="Coster F."/>
            <person name="Delaveau T."/>
            <person name="del Rey F."/>
            <person name="Dujon B."/>
            <person name="Eide L.G."/>
            <person name="Garcia-Cantalejo J.M."/>
            <person name="Goffeau A."/>
            <person name="Gomez-Peris A."/>
            <person name="Granotier C."/>
            <person name="Hanemann V."/>
            <person name="Hankeln T."/>
            <person name="Hoheisel J.D."/>
            <person name="Jaeger W."/>
            <person name="Jimenez A."/>
            <person name="Jonniaux J.-L."/>
            <person name="Kraemer C."/>
            <person name="Kuester H."/>
            <person name="Laamanen P."/>
            <person name="Legros Y."/>
            <person name="Louis E.J."/>
            <person name="Moeller-Rieker S."/>
            <person name="Monnet A."/>
            <person name="Moro M."/>
            <person name="Mueller-Auer S."/>
            <person name="Nussbaumer B."/>
            <person name="Paricio N."/>
            <person name="Paulin L."/>
            <person name="Perea J."/>
            <person name="Perez-Alonso M."/>
            <person name="Perez-Ortin J.E."/>
            <person name="Pohl T.M."/>
            <person name="Prydz H."/>
            <person name="Purnelle B."/>
            <person name="Rasmussen S.W."/>
            <person name="Remacha M.A."/>
            <person name="Revuelta J.L."/>
            <person name="Rieger M."/>
            <person name="Salom D."/>
            <person name="Saluz H.P."/>
            <person name="Saiz J.E."/>
            <person name="Saren A.-M."/>
            <person name="Schaefer M."/>
            <person name="Scharfe M."/>
            <person name="Schmidt E.R."/>
            <person name="Schneider C."/>
            <person name="Scholler P."/>
            <person name="Schwarz S."/>
            <person name="Soler-Mira A."/>
            <person name="Urrestarazu L.A."/>
            <person name="Verhasselt P."/>
            <person name="Vissers S."/>
            <person name="Voet M."/>
            <person name="Volckaert G."/>
            <person name="Wagner G."/>
            <person name="Wambutt R."/>
            <person name="Wedler E."/>
            <person name="Wedler H."/>
            <person name="Woelfl S."/>
            <person name="Harris D.E."/>
            <person name="Bowman S."/>
            <person name="Brown D."/>
            <person name="Churcher C.M."/>
            <person name="Connor R."/>
            <person name="Dedman K."/>
            <person name="Gentles S."/>
            <person name="Hamlin N."/>
            <person name="Hunt S."/>
            <person name="Jones L."/>
            <person name="McDonald S."/>
            <person name="Murphy L.D."/>
            <person name="Niblett D."/>
            <person name="Odell C."/>
            <person name="Oliver K."/>
            <person name="Rajandream M.A."/>
            <person name="Richards C."/>
            <person name="Shore L."/>
            <person name="Walsh S.V."/>
            <person name="Barrell B.G."/>
            <person name="Dietrich F.S."/>
            <person name="Mulligan J.T."/>
            <person name="Allen E."/>
            <person name="Araujo R."/>
            <person name="Aviles E."/>
            <person name="Berno A."/>
            <person name="Carpenter J."/>
            <person name="Chen E."/>
            <person name="Cherry J.M."/>
            <person name="Chung E."/>
            <person name="Duncan M."/>
            <person name="Hunicke-Smith S."/>
            <person name="Hyman R.W."/>
            <person name="Komp C."/>
            <person name="Lashkari D."/>
            <person name="Lew H."/>
            <person name="Lin D."/>
            <person name="Mosedale D."/>
            <person name="Nakahara K."/>
            <person name="Namath A."/>
            <person name="Oefner P."/>
            <person name="Oh C."/>
            <person name="Petel F.X."/>
            <person name="Roberts D."/>
            <person name="Schramm S."/>
            <person name="Schroeder M."/>
            <person name="Shogren T."/>
            <person name="Shroff N."/>
            <person name="Winant A."/>
            <person name="Yelton M.A."/>
            <person name="Botstein D."/>
            <person name="Davis R.W."/>
            <person name="Johnston M."/>
            <person name="Andrews S."/>
            <person name="Brinkman R."/>
            <person name="Cooper J."/>
            <person name="Ding H."/>
            <person name="Du Z."/>
            <person name="Favello A."/>
            <person name="Fulton L."/>
            <person name="Gattung S."/>
            <person name="Greco T."/>
            <person name="Hallsworth K."/>
            <person name="Hawkins J."/>
            <person name="Hillier L.W."/>
            <person name="Jier M."/>
            <person name="Johnson D."/>
            <person name="Johnston L."/>
            <person name="Kirsten J."/>
            <person name="Kucaba T."/>
            <person name="Langston Y."/>
            <person name="Latreille P."/>
            <person name="Le T."/>
            <person name="Mardis E."/>
            <person name="Menezes S."/>
            <person name="Miller N."/>
            <person name="Nhan M."/>
            <person name="Pauley A."/>
            <person name="Peluso D."/>
            <person name="Rifkin L."/>
            <person name="Riles L."/>
            <person name="Taich A."/>
            <person name="Trevaskis E."/>
            <person name="Vignati D."/>
            <person name="Wilcox L."/>
            <person name="Wohldman P."/>
            <person name="Vaudin M."/>
            <person name="Wilson R."/>
            <person name="Waterston R."/>
            <person name="Albermann K."/>
            <person name="Hani J."/>
            <person name="Heumann K."/>
            <person name="Kleine K."/>
            <person name="Mewes H.-W."/>
            <person name="Zollner A."/>
            <person name="Zaccaria P."/>
        </authorList>
    </citation>
    <scope>NUCLEOTIDE SEQUENCE [LARGE SCALE GENOMIC DNA]</scope>
    <source>
        <strain>ATCC 204508 / S288c</strain>
    </source>
</reference>
<reference key="2">
    <citation type="journal article" date="2014" name="G3 (Bethesda)">
        <title>The reference genome sequence of Saccharomyces cerevisiae: Then and now.</title>
        <authorList>
            <person name="Engel S.R."/>
            <person name="Dietrich F.S."/>
            <person name="Fisk D.G."/>
            <person name="Binkley G."/>
            <person name="Balakrishnan R."/>
            <person name="Costanzo M.C."/>
            <person name="Dwight S.S."/>
            <person name="Hitz B.C."/>
            <person name="Karra K."/>
            <person name="Nash R.S."/>
            <person name="Weng S."/>
            <person name="Wong E.D."/>
            <person name="Lloyd P."/>
            <person name="Skrzypek M.S."/>
            <person name="Miyasato S.R."/>
            <person name="Simison M."/>
            <person name="Cherry J.M."/>
        </authorList>
    </citation>
    <scope>GENOME REANNOTATION</scope>
    <source>
        <strain>ATCC 204508 / S288c</strain>
    </source>
</reference>
<comment type="caution">
    <text evidence="1">Product of a dubious gene prediction unlikely to encode a functional protein. Because of that it is not part of the S.cerevisiae S288c complete/reference proteome set.</text>
</comment>
<sequence length="124" mass="13602">MLVRDIAAEVYFAQSVCFSFSAFSLFRSFLATAPALYIKSLPNNKVAETSANVDHFATVSLCTSNEKLALVAPHELLEPLPNIIAHLFESFSAALLLKVCVLSKCSCSCSPSMRKHLRVSPFLF</sequence>